<evidence type="ECO:0000255" key="1">
    <source>
        <dbReference type="HAMAP-Rule" id="MF_00821"/>
    </source>
</evidence>
<feature type="chain" id="PRO_1000062499" description="Protein-export protein SecB">
    <location>
        <begin position="1"/>
        <end position="155"/>
    </location>
</feature>
<keyword id="KW-0143">Chaperone</keyword>
<keyword id="KW-0963">Cytoplasm</keyword>
<keyword id="KW-0653">Protein transport</keyword>
<keyword id="KW-1185">Reference proteome</keyword>
<keyword id="KW-0811">Translocation</keyword>
<keyword id="KW-0813">Transport</keyword>
<gene>
    <name evidence="1" type="primary">secB</name>
    <name type="ordered locus">Ping_3208</name>
</gene>
<proteinExistence type="inferred from homology"/>
<protein>
    <recommendedName>
        <fullName evidence="1">Protein-export protein SecB</fullName>
    </recommendedName>
</protein>
<dbReference type="EMBL" id="CP000510">
    <property type="protein sequence ID" value="ABM04895.1"/>
    <property type="molecule type" value="Genomic_DNA"/>
</dbReference>
<dbReference type="RefSeq" id="WP_011771447.1">
    <property type="nucleotide sequence ID" value="NC_008709.1"/>
</dbReference>
<dbReference type="SMR" id="A1SZI0"/>
<dbReference type="STRING" id="357804.Ping_3208"/>
<dbReference type="KEGG" id="pin:Ping_3208"/>
<dbReference type="eggNOG" id="COG1952">
    <property type="taxonomic scope" value="Bacteria"/>
</dbReference>
<dbReference type="HOGENOM" id="CLU_111574_1_0_6"/>
<dbReference type="OrthoDB" id="9795145at2"/>
<dbReference type="Proteomes" id="UP000000639">
    <property type="component" value="Chromosome"/>
</dbReference>
<dbReference type="GO" id="GO:0005737">
    <property type="term" value="C:cytoplasm"/>
    <property type="evidence" value="ECO:0007669"/>
    <property type="project" value="UniProtKB-SubCell"/>
</dbReference>
<dbReference type="GO" id="GO:0051082">
    <property type="term" value="F:unfolded protein binding"/>
    <property type="evidence" value="ECO:0007669"/>
    <property type="project" value="InterPro"/>
</dbReference>
<dbReference type="GO" id="GO:0006457">
    <property type="term" value="P:protein folding"/>
    <property type="evidence" value="ECO:0007669"/>
    <property type="project" value="UniProtKB-UniRule"/>
</dbReference>
<dbReference type="GO" id="GO:0051262">
    <property type="term" value="P:protein tetramerization"/>
    <property type="evidence" value="ECO:0007669"/>
    <property type="project" value="InterPro"/>
</dbReference>
<dbReference type="GO" id="GO:0015031">
    <property type="term" value="P:protein transport"/>
    <property type="evidence" value="ECO:0007669"/>
    <property type="project" value="UniProtKB-UniRule"/>
</dbReference>
<dbReference type="Gene3D" id="3.10.420.10">
    <property type="entry name" value="SecB-like"/>
    <property type="match status" value="1"/>
</dbReference>
<dbReference type="HAMAP" id="MF_00821">
    <property type="entry name" value="SecB"/>
    <property type="match status" value="1"/>
</dbReference>
<dbReference type="InterPro" id="IPR003708">
    <property type="entry name" value="SecB"/>
</dbReference>
<dbReference type="InterPro" id="IPR035958">
    <property type="entry name" value="SecB-like_sf"/>
</dbReference>
<dbReference type="NCBIfam" id="NF004393">
    <property type="entry name" value="PRK05751.1-4"/>
    <property type="match status" value="1"/>
</dbReference>
<dbReference type="NCBIfam" id="TIGR00809">
    <property type="entry name" value="secB"/>
    <property type="match status" value="1"/>
</dbReference>
<dbReference type="PANTHER" id="PTHR36918">
    <property type="match status" value="1"/>
</dbReference>
<dbReference type="PANTHER" id="PTHR36918:SF1">
    <property type="entry name" value="PROTEIN-EXPORT PROTEIN SECB"/>
    <property type="match status" value="1"/>
</dbReference>
<dbReference type="Pfam" id="PF02556">
    <property type="entry name" value="SecB"/>
    <property type="match status" value="1"/>
</dbReference>
<dbReference type="PRINTS" id="PR01594">
    <property type="entry name" value="SECBCHAPRONE"/>
</dbReference>
<dbReference type="SUPFAM" id="SSF54611">
    <property type="entry name" value="SecB-like"/>
    <property type="match status" value="1"/>
</dbReference>
<name>SECB_PSYIN</name>
<sequence>MAEQQAQPEQVEFNIQRVYVKDISFECPGSPNIFKKEWSPEVSMDIDTKSQKLEDNVFEVVLTLTTTAKVGEELAFLCEVQQAGIFSVGNLEGEQMAHCLNAFCPNILFPYARETVSSLVTRGTFPQLNLAPVNFDALFQQAVLRKQSEEAKLNS</sequence>
<comment type="function">
    <text evidence="1">One of the proteins required for the normal export of preproteins out of the cell cytoplasm. It is a molecular chaperone that binds to a subset of precursor proteins, maintaining them in a translocation-competent state. It also specifically binds to its receptor SecA.</text>
</comment>
<comment type="subunit">
    <text evidence="1">Homotetramer, a dimer of dimers. One homotetramer interacts with 1 SecA dimer.</text>
</comment>
<comment type="subcellular location">
    <subcellularLocation>
        <location evidence="1">Cytoplasm</location>
    </subcellularLocation>
</comment>
<comment type="similarity">
    <text evidence="1">Belongs to the SecB family.</text>
</comment>
<organism>
    <name type="scientific">Psychromonas ingrahamii (strain DSM 17664 / CCUG 51855 / 37)</name>
    <dbReference type="NCBI Taxonomy" id="357804"/>
    <lineage>
        <taxon>Bacteria</taxon>
        <taxon>Pseudomonadati</taxon>
        <taxon>Pseudomonadota</taxon>
        <taxon>Gammaproteobacteria</taxon>
        <taxon>Alteromonadales</taxon>
        <taxon>Psychromonadaceae</taxon>
        <taxon>Psychromonas</taxon>
    </lineage>
</organism>
<reference key="1">
    <citation type="journal article" date="2008" name="BMC Genomics">
        <title>Genomics of an extreme psychrophile, Psychromonas ingrahamii.</title>
        <authorList>
            <person name="Riley M."/>
            <person name="Staley J.T."/>
            <person name="Danchin A."/>
            <person name="Wang T.Z."/>
            <person name="Brettin T.S."/>
            <person name="Hauser L.J."/>
            <person name="Land M.L."/>
            <person name="Thompson L.S."/>
        </authorList>
    </citation>
    <scope>NUCLEOTIDE SEQUENCE [LARGE SCALE GENOMIC DNA]</scope>
    <source>
        <strain>DSM 17664 / CCUG 51855 / 37</strain>
    </source>
</reference>
<accession>A1SZI0</accession>